<name>CCR5_PANPA</name>
<evidence type="ECO:0000250" key="1">
    <source>
        <dbReference type="UniProtKB" id="P51681"/>
    </source>
</evidence>
<evidence type="ECO:0000250" key="2">
    <source>
        <dbReference type="UniProtKB" id="Q9XT76"/>
    </source>
</evidence>
<evidence type="ECO:0000255" key="3"/>
<evidence type="ECO:0000255" key="4">
    <source>
        <dbReference type="PROSITE-ProRule" id="PRU00521"/>
    </source>
</evidence>
<reference key="1">
    <citation type="journal article" date="1999" name="Mol. Biol. Evol.">
        <title>Sequence evolution of the CCR5 chemokine receptor gene in primates.</title>
        <authorList>
            <person name="Zhang Y.-W."/>
            <person name="Ryder O.A."/>
            <person name="Zhang Y.-P."/>
        </authorList>
    </citation>
    <scope>NUCLEOTIDE SEQUENCE [GENOMIC DNA]</scope>
</reference>
<keyword id="KW-1003">Cell membrane</keyword>
<keyword id="KW-1015">Disulfide bond</keyword>
<keyword id="KW-0297">G-protein coupled receptor</keyword>
<keyword id="KW-0325">Glycoprotein</keyword>
<keyword id="KW-0449">Lipoprotein</keyword>
<keyword id="KW-0472">Membrane</keyword>
<keyword id="KW-0564">Palmitate</keyword>
<keyword id="KW-0597">Phosphoprotein</keyword>
<keyword id="KW-0675">Receptor</keyword>
<keyword id="KW-1185">Reference proteome</keyword>
<keyword id="KW-0765">Sulfation</keyword>
<keyword id="KW-0807">Transducer</keyword>
<keyword id="KW-0812">Transmembrane</keyword>
<keyword id="KW-1133">Transmembrane helix</keyword>
<organism>
    <name type="scientific">Pan paniscus</name>
    <name type="common">Pygmy chimpanzee</name>
    <name type="synonym">Bonobo</name>
    <dbReference type="NCBI Taxonomy" id="9597"/>
    <lineage>
        <taxon>Eukaryota</taxon>
        <taxon>Metazoa</taxon>
        <taxon>Chordata</taxon>
        <taxon>Craniata</taxon>
        <taxon>Vertebrata</taxon>
        <taxon>Euteleostomi</taxon>
        <taxon>Mammalia</taxon>
        <taxon>Eutheria</taxon>
        <taxon>Euarchontoglires</taxon>
        <taxon>Primates</taxon>
        <taxon>Haplorrhini</taxon>
        <taxon>Catarrhini</taxon>
        <taxon>Hominidae</taxon>
        <taxon>Pan</taxon>
    </lineage>
</organism>
<gene>
    <name type="primary">CCR5</name>
    <name type="synonym">CMKBR5</name>
</gene>
<accession>P60574</accession>
<dbReference type="EMBL" id="AF177893">
    <property type="protein sequence ID" value="AAK43376.1"/>
    <property type="molecule type" value="Genomic_DNA"/>
</dbReference>
<dbReference type="RefSeq" id="XP_034812171.2">
    <property type="nucleotide sequence ID" value="XM_034956280.2"/>
</dbReference>
<dbReference type="SMR" id="P60574"/>
<dbReference type="STRING" id="9597.ENSPPAP00000001023"/>
<dbReference type="GlyCosmos" id="P60574">
    <property type="glycosylation" value="2 sites, No reported glycans"/>
</dbReference>
<dbReference type="GeneID" id="100970679"/>
<dbReference type="eggNOG" id="KOG3656">
    <property type="taxonomic scope" value="Eukaryota"/>
</dbReference>
<dbReference type="Proteomes" id="UP000240080">
    <property type="component" value="Unplaced"/>
</dbReference>
<dbReference type="GO" id="GO:0005737">
    <property type="term" value="C:cytoplasm"/>
    <property type="evidence" value="ECO:0007669"/>
    <property type="project" value="TreeGrafter"/>
</dbReference>
<dbReference type="GO" id="GO:0009897">
    <property type="term" value="C:external side of plasma membrane"/>
    <property type="evidence" value="ECO:0000250"/>
    <property type="project" value="UniProtKB"/>
</dbReference>
<dbReference type="GO" id="GO:0016493">
    <property type="term" value="F:C-C chemokine receptor activity"/>
    <property type="evidence" value="ECO:0000250"/>
    <property type="project" value="UniProtKB"/>
</dbReference>
<dbReference type="GO" id="GO:0071791">
    <property type="term" value="F:chemokine (C-C motif) ligand 5 binding"/>
    <property type="evidence" value="ECO:0007669"/>
    <property type="project" value="TreeGrafter"/>
</dbReference>
<dbReference type="GO" id="GO:0019722">
    <property type="term" value="P:calcium-mediated signaling"/>
    <property type="evidence" value="ECO:0007669"/>
    <property type="project" value="TreeGrafter"/>
</dbReference>
<dbReference type="GO" id="GO:0060326">
    <property type="term" value="P:cell chemotaxis"/>
    <property type="evidence" value="ECO:0007669"/>
    <property type="project" value="TreeGrafter"/>
</dbReference>
<dbReference type="GO" id="GO:0006955">
    <property type="term" value="P:immune response"/>
    <property type="evidence" value="ECO:0007669"/>
    <property type="project" value="InterPro"/>
</dbReference>
<dbReference type="GO" id="GO:0006954">
    <property type="term" value="P:inflammatory response"/>
    <property type="evidence" value="ECO:0007669"/>
    <property type="project" value="InterPro"/>
</dbReference>
<dbReference type="GO" id="GO:0007204">
    <property type="term" value="P:positive regulation of cytosolic calcium ion concentration"/>
    <property type="evidence" value="ECO:0007669"/>
    <property type="project" value="TreeGrafter"/>
</dbReference>
<dbReference type="CDD" id="cd15184">
    <property type="entry name" value="7tmA_CCR5_CCR2"/>
    <property type="match status" value="1"/>
</dbReference>
<dbReference type="FunFam" id="1.20.1070.10:FF:000026">
    <property type="entry name" value="C-C chemokine receptor type 5"/>
    <property type="match status" value="1"/>
</dbReference>
<dbReference type="Gene3D" id="1.20.1070.10">
    <property type="entry name" value="Rhodopsin 7-helix transmembrane proteins"/>
    <property type="match status" value="1"/>
</dbReference>
<dbReference type="InterPro" id="IPR050119">
    <property type="entry name" value="CCR1-9-like"/>
</dbReference>
<dbReference type="InterPro" id="IPR002240">
    <property type="entry name" value="Chemokine_CCR5"/>
</dbReference>
<dbReference type="InterPro" id="IPR000355">
    <property type="entry name" value="Chemokine_rcpt"/>
</dbReference>
<dbReference type="InterPro" id="IPR000276">
    <property type="entry name" value="GPCR_Rhodpsn"/>
</dbReference>
<dbReference type="InterPro" id="IPR017452">
    <property type="entry name" value="GPCR_Rhodpsn_7TM"/>
</dbReference>
<dbReference type="PANTHER" id="PTHR10489:SF686">
    <property type="entry name" value="C-C CHEMOKINE RECEPTOR TYPE 5"/>
    <property type="match status" value="1"/>
</dbReference>
<dbReference type="PANTHER" id="PTHR10489">
    <property type="entry name" value="CELL ADHESION MOLECULE"/>
    <property type="match status" value="1"/>
</dbReference>
<dbReference type="Pfam" id="PF00001">
    <property type="entry name" value="7tm_1"/>
    <property type="match status" value="1"/>
</dbReference>
<dbReference type="PRINTS" id="PR00657">
    <property type="entry name" value="CCCHEMOKINER"/>
</dbReference>
<dbReference type="PRINTS" id="PR01110">
    <property type="entry name" value="CHEMOKINER5"/>
</dbReference>
<dbReference type="PRINTS" id="PR00237">
    <property type="entry name" value="GPCRRHODOPSN"/>
</dbReference>
<dbReference type="SUPFAM" id="SSF81321">
    <property type="entry name" value="Family A G protein-coupled receptor-like"/>
    <property type="match status" value="1"/>
</dbReference>
<dbReference type="PROSITE" id="PS00237">
    <property type="entry name" value="G_PROTEIN_RECEP_F1_1"/>
    <property type="match status" value="1"/>
</dbReference>
<dbReference type="PROSITE" id="PS50262">
    <property type="entry name" value="G_PROTEIN_RECEP_F1_2"/>
    <property type="match status" value="1"/>
</dbReference>
<sequence length="352" mass="40539">MDYQVSSPIYDIDYYTSEPCQKINVKQIAARLLPPLYSLVFIFGFVGNMLVILILINCKRLKSMTDIYLLNLAISDLFFLLTVPFWAHYAAAQWDFGNTMCQLLTGLYFIGFFSGIFFIILLTIDRYLAIVHAVFALKARTVTFGVVTSVITWVVAVFASLPGIIFTRSQKEGLHYTCSSHFPYSQYQFWKNFQTLKIVILGLVLPLLVMVICYSGILKTLLRCRNEKKRHRAVRLIFTIMIVYFLFWAPYNIVLLLNTFQEFFGLNNCSSSNRLDQAMQVTETLGMTHCCINPIIYAFVGEKFRNYLLVFFQKHIAKRFCKCCSIFQQEAPERASSVYTRSTGEQEISVGL</sequence>
<feature type="chain" id="PRO_0000069271" description="C-C chemokine receptor type 5">
    <location>
        <begin position="1"/>
        <end position="352"/>
    </location>
</feature>
<feature type="topological domain" description="Extracellular" evidence="3">
    <location>
        <begin position="1"/>
        <end position="30"/>
    </location>
</feature>
<feature type="transmembrane region" description="Helical; Name=1" evidence="3">
    <location>
        <begin position="31"/>
        <end position="58"/>
    </location>
</feature>
<feature type="topological domain" description="Cytoplasmic" evidence="3">
    <location>
        <begin position="59"/>
        <end position="68"/>
    </location>
</feature>
<feature type="transmembrane region" description="Helical; Name=2" evidence="3">
    <location>
        <begin position="69"/>
        <end position="89"/>
    </location>
</feature>
<feature type="topological domain" description="Extracellular" evidence="3">
    <location>
        <begin position="90"/>
        <end position="102"/>
    </location>
</feature>
<feature type="transmembrane region" description="Helical; Name=3" evidence="3">
    <location>
        <begin position="103"/>
        <end position="124"/>
    </location>
</feature>
<feature type="topological domain" description="Cytoplasmic" evidence="3">
    <location>
        <begin position="125"/>
        <end position="141"/>
    </location>
</feature>
<feature type="transmembrane region" description="Helical; Name=4" evidence="3">
    <location>
        <begin position="142"/>
        <end position="166"/>
    </location>
</feature>
<feature type="topological domain" description="Extracellular" evidence="3">
    <location>
        <begin position="167"/>
        <end position="198"/>
    </location>
</feature>
<feature type="transmembrane region" description="Helical; Name=5" evidence="3">
    <location>
        <begin position="199"/>
        <end position="218"/>
    </location>
</feature>
<feature type="topological domain" description="Cytoplasmic" evidence="3">
    <location>
        <begin position="219"/>
        <end position="235"/>
    </location>
</feature>
<feature type="transmembrane region" description="Helical; Name=6" evidence="3">
    <location>
        <begin position="236"/>
        <end position="260"/>
    </location>
</feature>
<feature type="topological domain" description="Extracellular" evidence="3">
    <location>
        <begin position="261"/>
        <end position="277"/>
    </location>
</feature>
<feature type="transmembrane region" description="Helical; Name=7" evidence="3">
    <location>
        <begin position="278"/>
        <end position="301"/>
    </location>
</feature>
<feature type="topological domain" description="Cytoplasmic" evidence="3">
    <location>
        <begin position="302"/>
        <end position="352"/>
    </location>
</feature>
<feature type="modified residue" description="Sulfotyrosine" evidence="1">
    <location>
        <position position="3"/>
    </location>
</feature>
<feature type="modified residue" description="Sulfotyrosine" evidence="3">
    <location>
        <position position="10"/>
    </location>
</feature>
<feature type="modified residue" description="Sulfotyrosine" evidence="3">
    <location>
        <position position="14"/>
    </location>
</feature>
<feature type="modified residue" description="Sulfotyrosine" evidence="3">
    <location>
        <position position="15"/>
    </location>
</feature>
<feature type="modified residue" description="Phosphoserine; by BARK1" evidence="1">
    <location>
        <position position="336"/>
    </location>
</feature>
<feature type="modified residue" description="Phosphoserine; by BARK1" evidence="1">
    <location>
        <position position="337"/>
    </location>
</feature>
<feature type="modified residue" description="Phosphoserine; by BARK1" evidence="1">
    <location>
        <position position="342"/>
    </location>
</feature>
<feature type="modified residue" description="Phosphoserine; by BARK1" evidence="1">
    <location>
        <position position="349"/>
    </location>
</feature>
<feature type="lipid moiety-binding region" description="S-palmitoyl cysteine" evidence="1">
    <location>
        <position position="321"/>
    </location>
</feature>
<feature type="lipid moiety-binding region" description="S-palmitoyl cysteine" evidence="1">
    <location>
        <position position="323"/>
    </location>
</feature>
<feature type="lipid moiety-binding region" description="S-palmitoyl cysteine" evidence="1">
    <location>
        <position position="324"/>
    </location>
</feature>
<feature type="glycosylation site" description="O-linked (GalNAc...) serine" evidence="1">
    <location>
        <position position="6"/>
    </location>
</feature>
<feature type="glycosylation site" description="O-linked (GalNAc...) serine" evidence="1">
    <location>
        <position position="7"/>
    </location>
</feature>
<feature type="disulfide bond" evidence="1">
    <location>
        <begin position="20"/>
        <end position="269"/>
    </location>
</feature>
<feature type="disulfide bond" evidence="4">
    <location>
        <begin position="101"/>
        <end position="178"/>
    </location>
</feature>
<protein>
    <recommendedName>
        <fullName>C-C chemokine receptor type 5</fullName>
        <shortName>C-C CKR-5</shortName>
        <shortName>CC-CKR-5</shortName>
        <shortName>CCR-5</shortName>
        <shortName>CCR5</shortName>
    </recommendedName>
    <cdAntigenName>CD195</cdAntigenName>
</protein>
<comment type="function">
    <text evidence="1">Receptor for a number of inflammatory CC-chemokines including CCL3/MIP-1-alpha, CCL4/MIP-1-beta and RANTES and subsequently transduces a signal by increasing the intracellular calcium ion level. May play a role in the control of granulocytic lineage proliferation or differentiation. Participates in T-lymphocyte migration to the infection site by acting as a chemotactic receptor.</text>
</comment>
<comment type="subunit">
    <text evidence="1">Interacts with PRAF2. Efficient ligand binding to CCL3/MIP-1alpha and CCL4/MIP-1beta requires sulfation, O-glycosylation and sialic acid modifications. Glycosylation on Ser-6 is required for efficient binding of CCL4. Interacts with GRK2. Interacts with ARRB1 and ARRB2. Interacts with CNIH4. Interacts with S100A4; this interaction stimulates T-lymphocyte chemotaxis.</text>
</comment>
<comment type="subcellular location">
    <subcellularLocation>
        <location evidence="2">Cell membrane</location>
        <topology evidence="2">Multi-pass membrane protein</topology>
    </subcellularLocation>
</comment>
<comment type="PTM">
    <text evidence="1">Sulfated on at least 2 of the N-terminal tyrosines. Sulfation is required for efficient binding of the chemokines, CCL3 and CCL4 (By similarity).</text>
</comment>
<comment type="PTM">
    <text evidence="1">Palmitoylation in the C-terminal is important for cell surface expression.</text>
</comment>
<comment type="PTM">
    <text evidence="1">Phosphorylation on serine residues in the C-terminal is stimulated by binding CC chemokines especially by APO-RANTES.</text>
</comment>
<comment type="PTM">
    <text evidence="1">O-glycosylated, but not N-glycosylated. Ser-6 appears to be the major site even if Ser-7 may be also O-glycosylated. Also sialylated glycans present which contribute to chemokine binding. Thr-16 and Ser-17 may also be glycosylated and, if so, with small moieties such as a T-antigen.</text>
</comment>
<comment type="similarity">
    <text evidence="4">Belongs to the G-protein coupled receptor 1 family.</text>
</comment>
<proteinExistence type="inferred from homology"/>